<comment type="function">
    <text evidence="1">With S4 and S12 plays an important role in translational accuracy.</text>
</comment>
<comment type="function">
    <text evidence="1">Located at the back of the 30S subunit body where it stabilizes the conformation of the head with respect to the body.</text>
</comment>
<comment type="subunit">
    <text evidence="1">Part of the 30S ribosomal subunit. Contacts proteins S4 and S8.</text>
</comment>
<comment type="domain">
    <text>The N-terminal domain interacts with the head of the 30S subunit; the C-terminal domain interacts with the body and contacts protein S4. The interaction surface between S4 and S5 is involved in control of translational fidelity.</text>
</comment>
<comment type="similarity">
    <text evidence="1">Belongs to the universal ribosomal protein uS5 family.</text>
</comment>
<sequence length="168" mass="17582">MAENRRNDREQSEFEERVVSINRVTKVVKGGRRLRFAALVVVGDRNGRVGFGTGKAQEVPEAIRKAIEAAKKNLITVPMVGTTLPHEALGVFGGGKILLKPAVEGAGVAAGGAVRAVLELAGVADVTSKSLGSNTPINVVRATVDGLTQLKRAEEVAALRGKSVSDFA</sequence>
<gene>
    <name evidence="1" type="primary">rpsE</name>
    <name type="ordered locus">llmg_2364</name>
</gene>
<protein>
    <recommendedName>
        <fullName evidence="1">Small ribosomal subunit protein uS5</fullName>
    </recommendedName>
    <alternativeName>
        <fullName evidence="2">30S ribosomal protein S5</fullName>
    </alternativeName>
</protein>
<feature type="chain" id="PRO_0000323145" description="Small ribosomal subunit protein uS5">
    <location>
        <begin position="1"/>
        <end position="168"/>
    </location>
</feature>
<feature type="domain" description="S5 DRBM" evidence="1">
    <location>
        <begin position="14"/>
        <end position="77"/>
    </location>
</feature>
<name>RS5_LACLM</name>
<organism>
    <name type="scientific">Lactococcus lactis subsp. cremoris (strain MG1363)</name>
    <dbReference type="NCBI Taxonomy" id="416870"/>
    <lineage>
        <taxon>Bacteria</taxon>
        <taxon>Bacillati</taxon>
        <taxon>Bacillota</taxon>
        <taxon>Bacilli</taxon>
        <taxon>Lactobacillales</taxon>
        <taxon>Streptococcaceae</taxon>
        <taxon>Lactococcus</taxon>
        <taxon>Lactococcus cremoris subsp. cremoris</taxon>
    </lineage>
</organism>
<evidence type="ECO:0000255" key="1">
    <source>
        <dbReference type="HAMAP-Rule" id="MF_01307"/>
    </source>
</evidence>
<evidence type="ECO:0000305" key="2"/>
<keyword id="KW-0002">3D-structure</keyword>
<keyword id="KW-0687">Ribonucleoprotein</keyword>
<keyword id="KW-0689">Ribosomal protein</keyword>
<keyword id="KW-0694">RNA-binding</keyword>
<keyword id="KW-0699">rRNA-binding</keyword>
<accession>A2RNN6</accession>
<dbReference type="EMBL" id="AM406671">
    <property type="protein sequence ID" value="CAL98927.1"/>
    <property type="molecule type" value="Genomic_DNA"/>
</dbReference>
<dbReference type="RefSeq" id="WP_011836022.1">
    <property type="nucleotide sequence ID" value="NC_009004.1"/>
</dbReference>
<dbReference type="PDB" id="5MYJ">
    <property type="method" value="EM"/>
    <property type="resolution" value="5.60 A"/>
    <property type="chains" value="AE=1-168"/>
</dbReference>
<dbReference type="PDBsum" id="5MYJ"/>
<dbReference type="EMDB" id="EMD-3581"/>
<dbReference type="SMR" id="A2RNN6"/>
<dbReference type="STRING" id="416870.llmg_2364"/>
<dbReference type="GeneID" id="61110409"/>
<dbReference type="KEGG" id="llm:llmg_2364"/>
<dbReference type="eggNOG" id="COG0098">
    <property type="taxonomic scope" value="Bacteria"/>
</dbReference>
<dbReference type="HOGENOM" id="CLU_065898_2_2_9"/>
<dbReference type="OrthoDB" id="9809045at2"/>
<dbReference type="PhylomeDB" id="A2RNN6"/>
<dbReference type="Proteomes" id="UP000000364">
    <property type="component" value="Chromosome"/>
</dbReference>
<dbReference type="GO" id="GO:0015935">
    <property type="term" value="C:small ribosomal subunit"/>
    <property type="evidence" value="ECO:0007669"/>
    <property type="project" value="InterPro"/>
</dbReference>
<dbReference type="GO" id="GO:0019843">
    <property type="term" value="F:rRNA binding"/>
    <property type="evidence" value="ECO:0007669"/>
    <property type="project" value="UniProtKB-UniRule"/>
</dbReference>
<dbReference type="GO" id="GO:0003735">
    <property type="term" value="F:structural constituent of ribosome"/>
    <property type="evidence" value="ECO:0007669"/>
    <property type="project" value="InterPro"/>
</dbReference>
<dbReference type="GO" id="GO:0006412">
    <property type="term" value="P:translation"/>
    <property type="evidence" value="ECO:0007669"/>
    <property type="project" value="UniProtKB-UniRule"/>
</dbReference>
<dbReference type="FunFam" id="3.30.160.20:FF:000001">
    <property type="entry name" value="30S ribosomal protein S5"/>
    <property type="match status" value="1"/>
</dbReference>
<dbReference type="FunFam" id="3.30.230.10:FF:000002">
    <property type="entry name" value="30S ribosomal protein S5"/>
    <property type="match status" value="1"/>
</dbReference>
<dbReference type="Gene3D" id="3.30.160.20">
    <property type="match status" value="1"/>
</dbReference>
<dbReference type="Gene3D" id="3.30.230.10">
    <property type="match status" value="1"/>
</dbReference>
<dbReference type="HAMAP" id="MF_01307_B">
    <property type="entry name" value="Ribosomal_uS5_B"/>
    <property type="match status" value="1"/>
</dbReference>
<dbReference type="InterPro" id="IPR020568">
    <property type="entry name" value="Ribosomal_Su5_D2-typ_SF"/>
</dbReference>
<dbReference type="InterPro" id="IPR000851">
    <property type="entry name" value="Ribosomal_uS5"/>
</dbReference>
<dbReference type="InterPro" id="IPR005712">
    <property type="entry name" value="Ribosomal_uS5_bac-type"/>
</dbReference>
<dbReference type="InterPro" id="IPR005324">
    <property type="entry name" value="Ribosomal_uS5_C"/>
</dbReference>
<dbReference type="InterPro" id="IPR013810">
    <property type="entry name" value="Ribosomal_uS5_N"/>
</dbReference>
<dbReference type="InterPro" id="IPR018192">
    <property type="entry name" value="Ribosomal_uS5_N_CS"/>
</dbReference>
<dbReference type="InterPro" id="IPR014721">
    <property type="entry name" value="Ribsml_uS5_D2-typ_fold_subgr"/>
</dbReference>
<dbReference type="NCBIfam" id="TIGR01021">
    <property type="entry name" value="rpsE_bact"/>
    <property type="match status" value="1"/>
</dbReference>
<dbReference type="PANTHER" id="PTHR48277">
    <property type="entry name" value="MITOCHONDRIAL RIBOSOMAL PROTEIN S5"/>
    <property type="match status" value="1"/>
</dbReference>
<dbReference type="PANTHER" id="PTHR48277:SF1">
    <property type="entry name" value="MITOCHONDRIAL RIBOSOMAL PROTEIN S5"/>
    <property type="match status" value="1"/>
</dbReference>
<dbReference type="Pfam" id="PF00333">
    <property type="entry name" value="Ribosomal_S5"/>
    <property type="match status" value="1"/>
</dbReference>
<dbReference type="Pfam" id="PF03719">
    <property type="entry name" value="Ribosomal_S5_C"/>
    <property type="match status" value="1"/>
</dbReference>
<dbReference type="SUPFAM" id="SSF54768">
    <property type="entry name" value="dsRNA-binding domain-like"/>
    <property type="match status" value="1"/>
</dbReference>
<dbReference type="SUPFAM" id="SSF54211">
    <property type="entry name" value="Ribosomal protein S5 domain 2-like"/>
    <property type="match status" value="1"/>
</dbReference>
<dbReference type="PROSITE" id="PS00585">
    <property type="entry name" value="RIBOSOMAL_S5"/>
    <property type="match status" value="1"/>
</dbReference>
<dbReference type="PROSITE" id="PS50881">
    <property type="entry name" value="S5_DSRBD"/>
    <property type="match status" value="1"/>
</dbReference>
<proteinExistence type="evidence at protein level"/>
<reference key="1">
    <citation type="journal article" date="2007" name="J. Bacteriol.">
        <title>The complete genome sequence of the lactic acid bacterial paradigm Lactococcus lactis subsp. cremoris MG1363.</title>
        <authorList>
            <person name="Wegmann U."/>
            <person name="O'Connell-Motherway M."/>
            <person name="Zomer A."/>
            <person name="Buist G."/>
            <person name="Shearman C."/>
            <person name="Canchaya C."/>
            <person name="Ventura M."/>
            <person name="Goesmann A."/>
            <person name="Gasson M.J."/>
            <person name="Kuipers O.P."/>
            <person name="van Sinderen D."/>
            <person name="Kok J."/>
        </authorList>
    </citation>
    <scope>NUCLEOTIDE SEQUENCE [LARGE SCALE GENOMIC DNA]</scope>
    <source>
        <strain>MG1363</strain>
    </source>
</reference>